<accession>A9L4G0</accession>
<reference key="1">
    <citation type="submission" date="2007-11" db="EMBL/GenBank/DDBJ databases">
        <title>Complete sequence of chromosome of Shewanella baltica OS195.</title>
        <authorList>
            <consortium name="US DOE Joint Genome Institute"/>
            <person name="Copeland A."/>
            <person name="Lucas S."/>
            <person name="Lapidus A."/>
            <person name="Barry K."/>
            <person name="Glavina del Rio T."/>
            <person name="Dalin E."/>
            <person name="Tice H."/>
            <person name="Pitluck S."/>
            <person name="Chain P."/>
            <person name="Malfatti S."/>
            <person name="Shin M."/>
            <person name="Vergez L."/>
            <person name="Schmutz J."/>
            <person name="Larimer F."/>
            <person name="Land M."/>
            <person name="Hauser L."/>
            <person name="Kyrpides N."/>
            <person name="Kim E."/>
            <person name="Brettar I."/>
            <person name="Rodrigues J."/>
            <person name="Konstantinidis K."/>
            <person name="Klappenbach J."/>
            <person name="Hofle M."/>
            <person name="Tiedje J."/>
            <person name="Richardson P."/>
        </authorList>
    </citation>
    <scope>NUCLEOTIDE SEQUENCE [LARGE SCALE GENOMIC DNA]</scope>
    <source>
        <strain>OS195</strain>
    </source>
</reference>
<evidence type="ECO:0000255" key="1">
    <source>
        <dbReference type="HAMAP-Rule" id="MF_00688"/>
    </source>
</evidence>
<organism>
    <name type="scientific">Shewanella baltica (strain OS195)</name>
    <dbReference type="NCBI Taxonomy" id="399599"/>
    <lineage>
        <taxon>Bacteria</taxon>
        <taxon>Pseudomonadati</taxon>
        <taxon>Pseudomonadota</taxon>
        <taxon>Gammaproteobacteria</taxon>
        <taxon>Alteromonadales</taxon>
        <taxon>Shewanellaceae</taxon>
        <taxon>Shewanella</taxon>
    </lineage>
</organism>
<comment type="function">
    <text evidence="1">Functions in the N-end rule pathway of protein degradation where it conjugates Leu, Phe and, less efficiently, Met from aminoacyl-tRNAs to the N-termini of proteins containing an N-terminal arginine or lysine.</text>
</comment>
<comment type="catalytic activity">
    <reaction evidence="1">
        <text>N-terminal L-lysyl-[protein] + L-leucyl-tRNA(Leu) = N-terminal L-leucyl-L-lysyl-[protein] + tRNA(Leu) + H(+)</text>
        <dbReference type="Rhea" id="RHEA:12340"/>
        <dbReference type="Rhea" id="RHEA-COMP:9613"/>
        <dbReference type="Rhea" id="RHEA-COMP:9622"/>
        <dbReference type="Rhea" id="RHEA-COMP:12670"/>
        <dbReference type="Rhea" id="RHEA-COMP:12671"/>
        <dbReference type="ChEBI" id="CHEBI:15378"/>
        <dbReference type="ChEBI" id="CHEBI:65249"/>
        <dbReference type="ChEBI" id="CHEBI:78442"/>
        <dbReference type="ChEBI" id="CHEBI:78494"/>
        <dbReference type="ChEBI" id="CHEBI:133043"/>
        <dbReference type="EC" id="2.3.2.6"/>
    </reaction>
</comment>
<comment type="catalytic activity">
    <reaction evidence="1">
        <text>N-terminal L-arginyl-[protein] + L-leucyl-tRNA(Leu) = N-terminal L-leucyl-L-arginyl-[protein] + tRNA(Leu) + H(+)</text>
        <dbReference type="Rhea" id="RHEA:50416"/>
        <dbReference type="Rhea" id="RHEA-COMP:9613"/>
        <dbReference type="Rhea" id="RHEA-COMP:9622"/>
        <dbReference type="Rhea" id="RHEA-COMP:12672"/>
        <dbReference type="Rhea" id="RHEA-COMP:12673"/>
        <dbReference type="ChEBI" id="CHEBI:15378"/>
        <dbReference type="ChEBI" id="CHEBI:64719"/>
        <dbReference type="ChEBI" id="CHEBI:78442"/>
        <dbReference type="ChEBI" id="CHEBI:78494"/>
        <dbReference type="ChEBI" id="CHEBI:133044"/>
        <dbReference type="EC" id="2.3.2.6"/>
    </reaction>
</comment>
<comment type="catalytic activity">
    <reaction evidence="1">
        <text>L-phenylalanyl-tRNA(Phe) + an N-terminal L-alpha-aminoacyl-[protein] = an N-terminal L-phenylalanyl-L-alpha-aminoacyl-[protein] + tRNA(Phe)</text>
        <dbReference type="Rhea" id="RHEA:43632"/>
        <dbReference type="Rhea" id="RHEA-COMP:9668"/>
        <dbReference type="Rhea" id="RHEA-COMP:9699"/>
        <dbReference type="Rhea" id="RHEA-COMP:10636"/>
        <dbReference type="Rhea" id="RHEA-COMP:10637"/>
        <dbReference type="ChEBI" id="CHEBI:78442"/>
        <dbReference type="ChEBI" id="CHEBI:78531"/>
        <dbReference type="ChEBI" id="CHEBI:78597"/>
        <dbReference type="ChEBI" id="CHEBI:83561"/>
        <dbReference type="EC" id="2.3.2.6"/>
    </reaction>
</comment>
<comment type="subcellular location">
    <subcellularLocation>
        <location evidence="1">Cytoplasm</location>
    </subcellularLocation>
</comment>
<comment type="similarity">
    <text evidence="1">Belongs to the L/F-transferase family.</text>
</comment>
<protein>
    <recommendedName>
        <fullName evidence="1">Leucyl/phenylalanyl-tRNA--protein transferase</fullName>
        <ecNumber evidence="1">2.3.2.6</ecNumber>
    </recommendedName>
    <alternativeName>
        <fullName evidence="1">L/F-transferase</fullName>
    </alternativeName>
    <alternativeName>
        <fullName evidence="1">Leucyltransferase</fullName>
    </alternativeName>
    <alternativeName>
        <fullName evidence="1">Phenyalanyltransferase</fullName>
    </alternativeName>
</protein>
<dbReference type="EC" id="2.3.2.6" evidence="1"/>
<dbReference type="EMBL" id="CP000891">
    <property type="protein sequence ID" value="ABX49750.1"/>
    <property type="molecule type" value="Genomic_DNA"/>
</dbReference>
<dbReference type="RefSeq" id="WP_006086262.1">
    <property type="nucleotide sequence ID" value="NC_009997.1"/>
</dbReference>
<dbReference type="SMR" id="A9L4G0"/>
<dbReference type="GeneID" id="11772680"/>
<dbReference type="KEGG" id="sbn:Sbal195_2582"/>
<dbReference type="HOGENOM" id="CLU_075045_0_0_6"/>
<dbReference type="Proteomes" id="UP000000770">
    <property type="component" value="Chromosome"/>
</dbReference>
<dbReference type="GO" id="GO:0005737">
    <property type="term" value="C:cytoplasm"/>
    <property type="evidence" value="ECO:0007669"/>
    <property type="project" value="UniProtKB-SubCell"/>
</dbReference>
<dbReference type="GO" id="GO:0008914">
    <property type="term" value="F:leucyl-tRNA--protein transferase activity"/>
    <property type="evidence" value="ECO:0007669"/>
    <property type="project" value="UniProtKB-UniRule"/>
</dbReference>
<dbReference type="GO" id="GO:0030163">
    <property type="term" value="P:protein catabolic process"/>
    <property type="evidence" value="ECO:0007669"/>
    <property type="project" value="UniProtKB-UniRule"/>
</dbReference>
<dbReference type="FunFam" id="3.30.70.3550:FF:000001">
    <property type="entry name" value="Leucyl/phenylalanyl-tRNA--protein transferase"/>
    <property type="match status" value="1"/>
</dbReference>
<dbReference type="FunFam" id="3.40.630.70:FF:000001">
    <property type="entry name" value="Leucyl/phenylalanyl-tRNA--protein transferase"/>
    <property type="match status" value="1"/>
</dbReference>
<dbReference type="Gene3D" id="3.40.630.70">
    <property type="entry name" value="Leucyl/phenylalanyl-tRNA-protein transferase, C-terminal domain"/>
    <property type="match status" value="1"/>
</dbReference>
<dbReference type="Gene3D" id="3.30.70.3550">
    <property type="entry name" value="Leucyl/phenylalanyl-tRNA-protein transferase, N-terminal domain"/>
    <property type="match status" value="1"/>
</dbReference>
<dbReference type="HAMAP" id="MF_00688">
    <property type="entry name" value="Leu_Phe_trans"/>
    <property type="match status" value="1"/>
</dbReference>
<dbReference type="InterPro" id="IPR016181">
    <property type="entry name" value="Acyl_CoA_acyltransferase"/>
</dbReference>
<dbReference type="InterPro" id="IPR004616">
    <property type="entry name" value="Leu/Phe-tRNA_Trfase"/>
</dbReference>
<dbReference type="InterPro" id="IPR042203">
    <property type="entry name" value="Leu/Phe-tRNA_Trfase_C"/>
</dbReference>
<dbReference type="InterPro" id="IPR042221">
    <property type="entry name" value="Leu/Phe-tRNA_Trfase_N"/>
</dbReference>
<dbReference type="NCBIfam" id="TIGR00667">
    <property type="entry name" value="aat"/>
    <property type="match status" value="1"/>
</dbReference>
<dbReference type="PANTHER" id="PTHR30098">
    <property type="entry name" value="LEUCYL/PHENYLALANYL-TRNA--PROTEIN TRANSFERASE"/>
    <property type="match status" value="1"/>
</dbReference>
<dbReference type="PANTHER" id="PTHR30098:SF2">
    <property type="entry name" value="LEUCYL_PHENYLALANYL-TRNA--PROTEIN TRANSFERASE"/>
    <property type="match status" value="1"/>
</dbReference>
<dbReference type="Pfam" id="PF03588">
    <property type="entry name" value="Leu_Phe_trans"/>
    <property type="match status" value="1"/>
</dbReference>
<dbReference type="SUPFAM" id="SSF55729">
    <property type="entry name" value="Acyl-CoA N-acyltransferases (Nat)"/>
    <property type="match status" value="1"/>
</dbReference>
<feature type="chain" id="PRO_1000083101" description="Leucyl/phenylalanyl-tRNA--protein transferase">
    <location>
        <begin position="1"/>
        <end position="237"/>
    </location>
</feature>
<proteinExistence type="inferred from homology"/>
<keyword id="KW-0012">Acyltransferase</keyword>
<keyword id="KW-0963">Cytoplasm</keyword>
<keyword id="KW-0808">Transferase</keyword>
<sequence length="237" mass="26814">MKSLSFLNHEFEAFPSPELALTDPNGLLAIGGDLRPERLLSAYYNGIFPWFNSDDPILWWSPDPRAVFIPGEIHISTSLRKYLKKQPWRITINHAFTDVMAGCAQPREKQSGTWITQEIQMAYRELHHTGHAHSIEVWEGERLIGGLYGLAIGQVFCGESMFHRKTNASKAAVAALQQHLLKMGFKLIDAQVMNPHLESLGAKAIKRIDFITLLSELRNNPLDPATWTTKEVILELE</sequence>
<gene>
    <name evidence="1" type="primary">aat</name>
    <name type="ordered locus">Sbal195_2582</name>
</gene>
<name>LFTR_SHEB9</name>